<evidence type="ECO:0000255" key="1">
    <source>
        <dbReference type="HAMAP-Rule" id="MF_03141"/>
    </source>
</evidence>
<gene>
    <name evidence="1" type="primary">Lis-1</name>
    <name type="ORF">GG20577</name>
</gene>
<comment type="function">
    <text evidence="1">Positively regulates the activity of the minus-end directed microtubule motor protein dynein. May enhance dynein-mediated microtubule sliding by targeting dynein to the microtubule plus end. Required for several dynein- and microtubule-dependent processes.</text>
</comment>
<comment type="subcellular location">
    <subcellularLocation>
        <location evidence="1">Cytoplasm</location>
        <location evidence="1">Cytoskeleton</location>
    </subcellularLocation>
    <subcellularLocation>
        <location evidence="1">Cytoplasm</location>
        <location evidence="1">Cytoskeleton</location>
        <location evidence="1">Microtubule organizing center</location>
        <location evidence="1">Centrosome</location>
    </subcellularLocation>
    <text evidence="1">Localizes to the plus end of microtubules and to the centrosome.</text>
</comment>
<comment type="domain">
    <text evidence="1">Dimerization mediated by the LisH domain may be required to activate dynein.</text>
</comment>
<comment type="similarity">
    <text evidence="1">Belongs to the WD repeat LIS1/nudF family.</text>
</comment>
<protein>
    <recommendedName>
        <fullName evidence="1">Lissencephaly-1 homolog</fullName>
    </recommendedName>
</protein>
<dbReference type="EMBL" id="CH954179">
    <property type="protein sequence ID" value="EDV55807.1"/>
    <property type="molecule type" value="Genomic_DNA"/>
</dbReference>
<dbReference type="SMR" id="B3NPW0"/>
<dbReference type="EnsemblMetazoa" id="FBtr0140631">
    <property type="protein sequence ID" value="FBpp0139123"/>
    <property type="gene ID" value="FBgn0112767"/>
</dbReference>
<dbReference type="EnsemblMetazoa" id="XM_001975371.3">
    <property type="protein sequence ID" value="XP_001975407.1"/>
    <property type="gene ID" value="LOC6548525"/>
</dbReference>
<dbReference type="EnsemblMetazoa" id="XM_026980148.1">
    <property type="protein sequence ID" value="XP_026835949.1"/>
    <property type="gene ID" value="LOC6548525"/>
</dbReference>
<dbReference type="EnsemblMetazoa" id="XM_026980149.1">
    <property type="protein sequence ID" value="XP_026835950.1"/>
    <property type="gene ID" value="LOC6548525"/>
</dbReference>
<dbReference type="GeneID" id="6548525"/>
<dbReference type="KEGG" id="der:6548525"/>
<dbReference type="CTD" id="36791"/>
<dbReference type="eggNOG" id="KOG0295">
    <property type="taxonomic scope" value="Eukaryota"/>
</dbReference>
<dbReference type="HOGENOM" id="CLU_000288_57_15_1"/>
<dbReference type="OMA" id="WHVATKE"/>
<dbReference type="OrthoDB" id="674604at2759"/>
<dbReference type="PhylomeDB" id="B3NPW0"/>
<dbReference type="Proteomes" id="UP000008711">
    <property type="component" value="Unassembled WGS sequence"/>
</dbReference>
<dbReference type="GO" id="GO:1904115">
    <property type="term" value="C:axon cytoplasm"/>
    <property type="evidence" value="ECO:0007669"/>
    <property type="project" value="GOC"/>
</dbReference>
<dbReference type="GO" id="GO:0005938">
    <property type="term" value="C:cell cortex"/>
    <property type="evidence" value="ECO:0007669"/>
    <property type="project" value="EnsemblMetazoa"/>
</dbReference>
<dbReference type="GO" id="GO:0030425">
    <property type="term" value="C:dendrite"/>
    <property type="evidence" value="ECO:0007669"/>
    <property type="project" value="EnsemblMetazoa"/>
</dbReference>
<dbReference type="GO" id="GO:0005869">
    <property type="term" value="C:dynactin complex"/>
    <property type="evidence" value="ECO:0007669"/>
    <property type="project" value="EnsemblMetazoa"/>
</dbReference>
<dbReference type="GO" id="GO:0030286">
    <property type="term" value="C:dynein complex"/>
    <property type="evidence" value="ECO:0007669"/>
    <property type="project" value="EnsemblMetazoa"/>
</dbReference>
<dbReference type="GO" id="GO:0030426">
    <property type="term" value="C:growth cone"/>
    <property type="evidence" value="ECO:0007669"/>
    <property type="project" value="EnsemblMetazoa"/>
</dbReference>
<dbReference type="GO" id="GO:0000776">
    <property type="term" value="C:kinetochore"/>
    <property type="evidence" value="ECO:0007669"/>
    <property type="project" value="EnsemblMetazoa"/>
</dbReference>
<dbReference type="GO" id="GO:0005828">
    <property type="term" value="C:kinetochore microtubule"/>
    <property type="evidence" value="ECO:0007669"/>
    <property type="project" value="EnsemblMetazoa"/>
</dbReference>
<dbReference type="GO" id="GO:0043025">
    <property type="term" value="C:neuronal cell body"/>
    <property type="evidence" value="ECO:0007669"/>
    <property type="project" value="EnsemblMetazoa"/>
</dbReference>
<dbReference type="GO" id="GO:0031616">
    <property type="term" value="C:spindle pole centrosome"/>
    <property type="evidence" value="ECO:0007669"/>
    <property type="project" value="EnsemblMetazoa"/>
</dbReference>
<dbReference type="GO" id="GO:0070840">
    <property type="term" value="F:dynein complex binding"/>
    <property type="evidence" value="ECO:0007669"/>
    <property type="project" value="UniProtKB-UniRule"/>
</dbReference>
<dbReference type="GO" id="GO:0007298">
    <property type="term" value="P:border follicle cell migration"/>
    <property type="evidence" value="ECO:0007669"/>
    <property type="project" value="EnsemblMetazoa"/>
</dbReference>
<dbReference type="GO" id="GO:0051642">
    <property type="term" value="P:centrosome localization"/>
    <property type="evidence" value="ECO:0007669"/>
    <property type="project" value="EnsemblMetazoa"/>
</dbReference>
<dbReference type="GO" id="GO:0051299">
    <property type="term" value="P:centrosome separation"/>
    <property type="evidence" value="ECO:0007669"/>
    <property type="project" value="EnsemblMetazoa"/>
</dbReference>
<dbReference type="GO" id="GO:0030381">
    <property type="term" value="P:chorion-containing eggshell pattern formation"/>
    <property type="evidence" value="ECO:0007669"/>
    <property type="project" value="EnsemblMetazoa"/>
</dbReference>
<dbReference type="GO" id="GO:0061883">
    <property type="term" value="P:clathrin-dependent endocytosis involved in vitellogenesis"/>
    <property type="evidence" value="ECO:0007669"/>
    <property type="project" value="EnsemblMetazoa"/>
</dbReference>
<dbReference type="GO" id="GO:0048813">
    <property type="term" value="P:dendrite morphogenesis"/>
    <property type="evidence" value="ECO:0007669"/>
    <property type="project" value="EnsemblMetazoa"/>
</dbReference>
<dbReference type="GO" id="GO:0000132">
    <property type="term" value="P:establishment of mitotic spindle orientation"/>
    <property type="evidence" value="ECO:0007669"/>
    <property type="project" value="UniProtKB-UniRule"/>
</dbReference>
<dbReference type="GO" id="GO:0048142">
    <property type="term" value="P:germarium-derived cystoblast division"/>
    <property type="evidence" value="ECO:0007669"/>
    <property type="project" value="EnsemblMetazoa"/>
</dbReference>
<dbReference type="GO" id="GO:0007294">
    <property type="term" value="P:germarium-derived oocyte fate determination"/>
    <property type="evidence" value="ECO:0007669"/>
    <property type="project" value="EnsemblMetazoa"/>
</dbReference>
<dbReference type="GO" id="GO:0008298">
    <property type="term" value="P:intracellular mRNA localization"/>
    <property type="evidence" value="ECO:0007669"/>
    <property type="project" value="EnsemblMetazoa"/>
</dbReference>
<dbReference type="GO" id="GO:0006886">
    <property type="term" value="P:intracellular protein transport"/>
    <property type="evidence" value="ECO:0007669"/>
    <property type="project" value="EnsemblMetazoa"/>
</dbReference>
<dbReference type="GO" id="GO:0051383">
    <property type="term" value="P:kinetochore organization"/>
    <property type="evidence" value="ECO:0007669"/>
    <property type="project" value="EnsemblMetazoa"/>
</dbReference>
<dbReference type="GO" id="GO:0051012">
    <property type="term" value="P:microtubule sliding"/>
    <property type="evidence" value="ECO:0007669"/>
    <property type="project" value="UniProtKB-UniRule"/>
</dbReference>
<dbReference type="GO" id="GO:0046716">
    <property type="term" value="P:muscle cell cellular homeostasis"/>
    <property type="evidence" value="ECO:0007669"/>
    <property type="project" value="EnsemblMetazoa"/>
</dbReference>
<dbReference type="GO" id="GO:0016319">
    <property type="term" value="P:mushroom body development"/>
    <property type="evidence" value="ECO:0007669"/>
    <property type="project" value="EnsemblMetazoa"/>
</dbReference>
<dbReference type="GO" id="GO:0007405">
    <property type="term" value="P:neuroblast proliferation"/>
    <property type="evidence" value="ECO:0007669"/>
    <property type="project" value="EnsemblMetazoa"/>
</dbReference>
<dbReference type="GO" id="GO:0030473">
    <property type="term" value="P:nuclear migration along microtubule"/>
    <property type="evidence" value="ECO:0007669"/>
    <property type="project" value="EnsemblMetazoa"/>
</dbReference>
<dbReference type="GO" id="GO:0007312">
    <property type="term" value="P:oocyte nucleus migration involved in oocyte dorsal/ventral axis specification"/>
    <property type="evidence" value="ECO:0007669"/>
    <property type="project" value="EnsemblMetazoa"/>
</dbReference>
<dbReference type="GO" id="GO:0030723">
    <property type="term" value="P:ovarian fusome organization"/>
    <property type="evidence" value="ECO:0007669"/>
    <property type="project" value="EnsemblMetazoa"/>
</dbReference>
<dbReference type="GO" id="GO:0007300">
    <property type="term" value="P:ovarian nurse cell to oocyte transport"/>
    <property type="evidence" value="ECO:0007669"/>
    <property type="project" value="EnsemblMetazoa"/>
</dbReference>
<dbReference type="GO" id="GO:0072499">
    <property type="term" value="P:photoreceptor cell axon guidance"/>
    <property type="evidence" value="ECO:0007669"/>
    <property type="project" value="EnsemblMetazoa"/>
</dbReference>
<dbReference type="GO" id="GO:0050772">
    <property type="term" value="P:positive regulation of axonogenesis"/>
    <property type="evidence" value="ECO:0007669"/>
    <property type="project" value="EnsemblMetazoa"/>
</dbReference>
<dbReference type="GO" id="GO:0030513">
    <property type="term" value="P:positive regulation of BMP signaling pathway"/>
    <property type="evidence" value="ECO:0007669"/>
    <property type="project" value="EnsemblMetazoa"/>
</dbReference>
<dbReference type="GO" id="GO:0045842">
    <property type="term" value="P:positive regulation of mitotic metaphase/anaphase transition"/>
    <property type="evidence" value="ECO:0007669"/>
    <property type="project" value="EnsemblMetazoa"/>
</dbReference>
<dbReference type="GO" id="GO:0034501">
    <property type="term" value="P:protein localization to kinetochore"/>
    <property type="evidence" value="ECO:0007669"/>
    <property type="project" value="EnsemblMetazoa"/>
</dbReference>
<dbReference type="GO" id="GO:0048814">
    <property type="term" value="P:regulation of dendrite morphogenesis"/>
    <property type="evidence" value="ECO:0007669"/>
    <property type="project" value="EnsemblMetazoa"/>
</dbReference>
<dbReference type="GO" id="GO:0008090">
    <property type="term" value="P:retrograde axonal transport"/>
    <property type="evidence" value="ECO:0007669"/>
    <property type="project" value="EnsemblMetazoa"/>
</dbReference>
<dbReference type="GO" id="GO:0042052">
    <property type="term" value="P:rhabdomere development"/>
    <property type="evidence" value="ECO:0007669"/>
    <property type="project" value="EnsemblMetazoa"/>
</dbReference>
<dbReference type="GO" id="GO:0007283">
    <property type="term" value="P:spermatogenesis"/>
    <property type="evidence" value="ECO:0007669"/>
    <property type="project" value="EnsemblMetazoa"/>
</dbReference>
<dbReference type="GO" id="GO:0051225">
    <property type="term" value="P:spindle assembly"/>
    <property type="evidence" value="ECO:0007669"/>
    <property type="project" value="EnsemblMetazoa"/>
</dbReference>
<dbReference type="GO" id="GO:0019827">
    <property type="term" value="P:stem cell population maintenance"/>
    <property type="evidence" value="ECO:0007669"/>
    <property type="project" value="EnsemblMetazoa"/>
</dbReference>
<dbReference type="CDD" id="cd00200">
    <property type="entry name" value="WD40"/>
    <property type="match status" value="1"/>
</dbReference>
<dbReference type="FunFam" id="2.130.10.10:FF:000038">
    <property type="entry name" value="Lissencephaly-1 homolog B"/>
    <property type="match status" value="1"/>
</dbReference>
<dbReference type="FunFam" id="1.20.960.30:FF:000002">
    <property type="entry name" value="Platelet-activating factor acetylhydrolase ib"/>
    <property type="match status" value="1"/>
</dbReference>
<dbReference type="Gene3D" id="1.20.960.30">
    <property type="match status" value="1"/>
</dbReference>
<dbReference type="Gene3D" id="2.130.10.10">
    <property type="entry name" value="YVTN repeat-like/Quinoprotein amine dehydrogenase"/>
    <property type="match status" value="1"/>
</dbReference>
<dbReference type="HAMAP" id="MF_03141">
    <property type="entry name" value="lis1"/>
    <property type="match status" value="1"/>
</dbReference>
<dbReference type="InterPro" id="IPR017252">
    <property type="entry name" value="Dynein_regulator_LIS1"/>
</dbReference>
<dbReference type="InterPro" id="IPR020472">
    <property type="entry name" value="G-protein_beta_WD-40_rep"/>
</dbReference>
<dbReference type="InterPro" id="IPR037190">
    <property type="entry name" value="LIS1_N"/>
</dbReference>
<dbReference type="InterPro" id="IPR006594">
    <property type="entry name" value="LisH"/>
</dbReference>
<dbReference type="InterPro" id="IPR056795">
    <property type="entry name" value="PAC1-like_LisH-like_dom"/>
</dbReference>
<dbReference type="InterPro" id="IPR015943">
    <property type="entry name" value="WD40/YVTN_repeat-like_dom_sf"/>
</dbReference>
<dbReference type="InterPro" id="IPR019775">
    <property type="entry name" value="WD40_repeat_CS"/>
</dbReference>
<dbReference type="InterPro" id="IPR036322">
    <property type="entry name" value="WD40_repeat_dom_sf"/>
</dbReference>
<dbReference type="InterPro" id="IPR001680">
    <property type="entry name" value="WD40_rpt"/>
</dbReference>
<dbReference type="InterPro" id="IPR050349">
    <property type="entry name" value="WD_LIS1/nudF_dynein_reg"/>
</dbReference>
<dbReference type="PANTHER" id="PTHR44129">
    <property type="entry name" value="WD REPEAT-CONTAINING PROTEIN POP1"/>
    <property type="match status" value="1"/>
</dbReference>
<dbReference type="Pfam" id="PF24951">
    <property type="entry name" value="LisH_PAC1"/>
    <property type="match status" value="1"/>
</dbReference>
<dbReference type="Pfam" id="PF00400">
    <property type="entry name" value="WD40"/>
    <property type="match status" value="7"/>
</dbReference>
<dbReference type="PIRSF" id="PIRSF037647">
    <property type="entry name" value="Dynein_regulator_Lis1"/>
    <property type="match status" value="1"/>
</dbReference>
<dbReference type="PRINTS" id="PR00320">
    <property type="entry name" value="GPROTEINBRPT"/>
</dbReference>
<dbReference type="SMART" id="SM00667">
    <property type="entry name" value="LisH"/>
    <property type="match status" value="1"/>
</dbReference>
<dbReference type="SMART" id="SM00320">
    <property type="entry name" value="WD40"/>
    <property type="match status" value="7"/>
</dbReference>
<dbReference type="SUPFAM" id="SSF109925">
    <property type="entry name" value="Lissencephaly-1 protein (Lis-1, PAF-AH alpha) N-terminal domain"/>
    <property type="match status" value="1"/>
</dbReference>
<dbReference type="SUPFAM" id="SSF50978">
    <property type="entry name" value="WD40 repeat-like"/>
    <property type="match status" value="1"/>
</dbReference>
<dbReference type="PROSITE" id="PS50896">
    <property type="entry name" value="LISH"/>
    <property type="match status" value="1"/>
</dbReference>
<dbReference type="PROSITE" id="PS00678">
    <property type="entry name" value="WD_REPEATS_1"/>
    <property type="match status" value="6"/>
</dbReference>
<dbReference type="PROSITE" id="PS50082">
    <property type="entry name" value="WD_REPEATS_2"/>
    <property type="match status" value="7"/>
</dbReference>
<dbReference type="PROSITE" id="PS50294">
    <property type="entry name" value="WD_REPEATS_REGION"/>
    <property type="match status" value="1"/>
</dbReference>
<reference key="1">
    <citation type="journal article" date="2007" name="Nature">
        <title>Evolution of genes and genomes on the Drosophila phylogeny.</title>
        <authorList>
            <consortium name="Drosophila 12 genomes consortium"/>
        </authorList>
    </citation>
    <scope>NUCLEOTIDE SEQUENCE [LARGE SCALE GENOMIC DNA]</scope>
    <source>
        <strain>Tucson 14021-0224.01</strain>
    </source>
</reference>
<organism>
    <name type="scientific">Drosophila erecta</name>
    <name type="common">Fruit fly</name>
    <dbReference type="NCBI Taxonomy" id="7220"/>
    <lineage>
        <taxon>Eukaryota</taxon>
        <taxon>Metazoa</taxon>
        <taxon>Ecdysozoa</taxon>
        <taxon>Arthropoda</taxon>
        <taxon>Hexapoda</taxon>
        <taxon>Insecta</taxon>
        <taxon>Pterygota</taxon>
        <taxon>Neoptera</taxon>
        <taxon>Endopterygota</taxon>
        <taxon>Diptera</taxon>
        <taxon>Brachycera</taxon>
        <taxon>Muscomorpha</taxon>
        <taxon>Ephydroidea</taxon>
        <taxon>Drosophilidae</taxon>
        <taxon>Drosophila</taxon>
        <taxon>Sophophora</taxon>
    </lineage>
</organism>
<sequence>MKMVLSQRQREELNQAIADYLGSNGYADSLETFRKEADLSTEVEKKFGGLLEKKWTSVIRLQKKVMELEAKLTEAEKEVIEGAPTKNKRTPGEWIPRPPEKFSLTGHRASITRVIFHPIFGLMVSASEDATIRIWDFETGEYERSLKGHTDSVQDVAFDAQGKLLASCSADLSIKLWDFQQSYECIKTMHGHDHNVSSVAFVPAGDYVLSASRDRTIKMWEVATGYCVKTYTGHREWVRMVRVHIEGSIFATCSNDQTIRVWLTNSKDCKVELRDHEHTVECIAWAPEAAASAINEAAGADNKKGHHQGPFLASGSRDKTIRIWDVSVGLCLLTLSGHDNWVRGLAFHPGGKYLVSASDDKTIRVWDLRNKRCMKTLYAHQHFCTSIDFHKAHPYVISGSVDQTVKVWECR</sequence>
<keyword id="KW-0131">Cell cycle</keyword>
<keyword id="KW-0132">Cell division</keyword>
<keyword id="KW-0175">Coiled coil</keyword>
<keyword id="KW-0963">Cytoplasm</keyword>
<keyword id="KW-0206">Cytoskeleton</keyword>
<keyword id="KW-0493">Microtubule</keyword>
<keyword id="KW-0498">Mitosis</keyword>
<keyword id="KW-0677">Repeat</keyword>
<keyword id="KW-0813">Transport</keyword>
<keyword id="KW-0853">WD repeat</keyword>
<name>LIS1_DROER</name>
<accession>B3NPW0</accession>
<feature type="chain" id="PRO_0000405041" description="Lissencephaly-1 homolog">
    <location>
        <begin position="1"/>
        <end position="411"/>
    </location>
</feature>
<feature type="domain" description="LisH" evidence="1">
    <location>
        <begin position="9"/>
        <end position="41"/>
    </location>
</feature>
<feature type="repeat" description="WD 1">
    <location>
        <begin position="106"/>
        <end position="147"/>
    </location>
</feature>
<feature type="repeat" description="WD 2">
    <location>
        <begin position="148"/>
        <end position="187"/>
    </location>
</feature>
<feature type="repeat" description="WD 3">
    <location>
        <begin position="191"/>
        <end position="230"/>
    </location>
</feature>
<feature type="repeat" description="WD 4">
    <location>
        <begin position="233"/>
        <end position="272"/>
    </location>
</feature>
<feature type="repeat" description="WD 5">
    <location>
        <begin position="275"/>
        <end position="334"/>
    </location>
</feature>
<feature type="repeat" description="WD 6">
    <location>
        <begin position="337"/>
        <end position="376"/>
    </location>
</feature>
<feature type="repeat" description="WD 7">
    <location>
        <begin position="379"/>
        <end position="411"/>
    </location>
</feature>
<feature type="coiled-coil region" evidence="1">
    <location>
        <begin position="56"/>
        <end position="83"/>
    </location>
</feature>
<proteinExistence type="inferred from homology"/>